<keyword id="KW-0240">DNA-directed RNA polymerase</keyword>
<keyword id="KW-0460">Magnesium</keyword>
<keyword id="KW-0479">Metal-binding</keyword>
<keyword id="KW-0548">Nucleotidyltransferase</keyword>
<keyword id="KW-1185">Reference proteome</keyword>
<keyword id="KW-0804">Transcription</keyword>
<keyword id="KW-0808">Transferase</keyword>
<keyword id="KW-0862">Zinc</keyword>
<evidence type="ECO:0000255" key="1">
    <source>
        <dbReference type="HAMAP-Rule" id="MF_01322"/>
    </source>
</evidence>
<evidence type="ECO:0000256" key="2">
    <source>
        <dbReference type="SAM" id="MobiDB-lite"/>
    </source>
</evidence>
<accession>Q62GJ7</accession>
<feature type="chain" id="PRO_0000225517" description="DNA-directed RNA polymerase subunit beta'">
    <location>
        <begin position="1"/>
        <end position="1412"/>
    </location>
</feature>
<feature type="region of interest" description="Disordered" evidence="2">
    <location>
        <begin position="1393"/>
        <end position="1412"/>
    </location>
</feature>
<feature type="binding site" evidence="1">
    <location>
        <position position="70"/>
    </location>
    <ligand>
        <name>Zn(2+)</name>
        <dbReference type="ChEBI" id="CHEBI:29105"/>
        <label>1</label>
    </ligand>
</feature>
<feature type="binding site" evidence="1">
    <location>
        <position position="72"/>
    </location>
    <ligand>
        <name>Zn(2+)</name>
        <dbReference type="ChEBI" id="CHEBI:29105"/>
        <label>1</label>
    </ligand>
</feature>
<feature type="binding site" evidence="1">
    <location>
        <position position="85"/>
    </location>
    <ligand>
        <name>Zn(2+)</name>
        <dbReference type="ChEBI" id="CHEBI:29105"/>
        <label>1</label>
    </ligand>
</feature>
<feature type="binding site" evidence="1">
    <location>
        <position position="88"/>
    </location>
    <ligand>
        <name>Zn(2+)</name>
        <dbReference type="ChEBI" id="CHEBI:29105"/>
        <label>1</label>
    </ligand>
</feature>
<feature type="binding site" evidence="1">
    <location>
        <position position="460"/>
    </location>
    <ligand>
        <name>Mg(2+)</name>
        <dbReference type="ChEBI" id="CHEBI:18420"/>
    </ligand>
</feature>
<feature type="binding site" evidence="1">
    <location>
        <position position="462"/>
    </location>
    <ligand>
        <name>Mg(2+)</name>
        <dbReference type="ChEBI" id="CHEBI:18420"/>
    </ligand>
</feature>
<feature type="binding site" evidence="1">
    <location>
        <position position="464"/>
    </location>
    <ligand>
        <name>Mg(2+)</name>
        <dbReference type="ChEBI" id="CHEBI:18420"/>
    </ligand>
</feature>
<feature type="binding site" evidence="1">
    <location>
        <position position="819"/>
    </location>
    <ligand>
        <name>Zn(2+)</name>
        <dbReference type="ChEBI" id="CHEBI:29105"/>
        <label>2</label>
    </ligand>
</feature>
<feature type="binding site" evidence="1">
    <location>
        <position position="893"/>
    </location>
    <ligand>
        <name>Zn(2+)</name>
        <dbReference type="ChEBI" id="CHEBI:29105"/>
        <label>2</label>
    </ligand>
</feature>
<feature type="binding site" evidence="1">
    <location>
        <position position="900"/>
    </location>
    <ligand>
        <name>Zn(2+)</name>
        <dbReference type="ChEBI" id="CHEBI:29105"/>
        <label>2</label>
    </ligand>
</feature>
<feature type="binding site" evidence="1">
    <location>
        <position position="903"/>
    </location>
    <ligand>
        <name>Zn(2+)</name>
        <dbReference type="ChEBI" id="CHEBI:29105"/>
        <label>2</label>
    </ligand>
</feature>
<protein>
    <recommendedName>
        <fullName evidence="1">DNA-directed RNA polymerase subunit beta'</fullName>
        <shortName evidence="1">RNAP subunit beta'</shortName>
        <ecNumber evidence="1">2.7.7.6</ecNumber>
    </recommendedName>
    <alternativeName>
        <fullName evidence="1">RNA polymerase subunit beta'</fullName>
    </alternativeName>
    <alternativeName>
        <fullName evidence="1">Transcriptase subunit beta'</fullName>
    </alternativeName>
</protein>
<name>RPOC_BURMA</name>
<reference key="1">
    <citation type="journal article" date="2004" name="Proc. Natl. Acad. Sci. U.S.A.">
        <title>Structural flexibility in the Burkholderia mallei genome.</title>
        <authorList>
            <person name="Nierman W.C."/>
            <person name="DeShazer D."/>
            <person name="Kim H.S."/>
            <person name="Tettelin H."/>
            <person name="Nelson K.E."/>
            <person name="Feldblyum T.V."/>
            <person name="Ulrich R.L."/>
            <person name="Ronning C.M."/>
            <person name="Brinkac L.M."/>
            <person name="Daugherty S.C."/>
            <person name="Davidsen T.D."/>
            <person name="DeBoy R.T."/>
            <person name="Dimitrov G."/>
            <person name="Dodson R.J."/>
            <person name="Durkin A.S."/>
            <person name="Gwinn M.L."/>
            <person name="Haft D.H."/>
            <person name="Khouri H.M."/>
            <person name="Kolonay J.F."/>
            <person name="Madupu R."/>
            <person name="Mohammoud Y."/>
            <person name="Nelson W.C."/>
            <person name="Radune D."/>
            <person name="Romero C.M."/>
            <person name="Sarria S."/>
            <person name="Selengut J."/>
            <person name="Shamblin C."/>
            <person name="Sullivan S.A."/>
            <person name="White O."/>
            <person name="Yu Y."/>
            <person name="Zafar N."/>
            <person name="Zhou L."/>
            <person name="Fraser C.M."/>
        </authorList>
    </citation>
    <scope>NUCLEOTIDE SEQUENCE [LARGE SCALE GENOMIC DNA]</scope>
    <source>
        <strain>ATCC 23344</strain>
    </source>
</reference>
<proteinExistence type="inferred from homology"/>
<dbReference type="EC" id="2.7.7.6" evidence="1"/>
<dbReference type="EMBL" id="CP000010">
    <property type="protein sequence ID" value="AAU47878.1"/>
    <property type="molecule type" value="Genomic_DNA"/>
</dbReference>
<dbReference type="RefSeq" id="WP_004198364.1">
    <property type="nucleotide sequence ID" value="NC_006348.1"/>
</dbReference>
<dbReference type="RefSeq" id="YP_104174.1">
    <property type="nucleotide sequence ID" value="NC_006348.1"/>
</dbReference>
<dbReference type="SMR" id="Q62GJ7"/>
<dbReference type="GeneID" id="92980327"/>
<dbReference type="KEGG" id="bma:BMA2640"/>
<dbReference type="PATRIC" id="fig|243160.12.peg.2713"/>
<dbReference type="eggNOG" id="COG0086">
    <property type="taxonomic scope" value="Bacteria"/>
</dbReference>
<dbReference type="HOGENOM" id="CLU_000524_3_1_4"/>
<dbReference type="Proteomes" id="UP000006693">
    <property type="component" value="Chromosome 1"/>
</dbReference>
<dbReference type="GO" id="GO:0000428">
    <property type="term" value="C:DNA-directed RNA polymerase complex"/>
    <property type="evidence" value="ECO:0007669"/>
    <property type="project" value="UniProtKB-KW"/>
</dbReference>
<dbReference type="GO" id="GO:0003677">
    <property type="term" value="F:DNA binding"/>
    <property type="evidence" value="ECO:0007669"/>
    <property type="project" value="UniProtKB-UniRule"/>
</dbReference>
<dbReference type="GO" id="GO:0003899">
    <property type="term" value="F:DNA-directed RNA polymerase activity"/>
    <property type="evidence" value="ECO:0007669"/>
    <property type="project" value="UniProtKB-UniRule"/>
</dbReference>
<dbReference type="GO" id="GO:0000287">
    <property type="term" value="F:magnesium ion binding"/>
    <property type="evidence" value="ECO:0007669"/>
    <property type="project" value="UniProtKB-UniRule"/>
</dbReference>
<dbReference type="GO" id="GO:0008270">
    <property type="term" value="F:zinc ion binding"/>
    <property type="evidence" value="ECO:0007669"/>
    <property type="project" value="UniProtKB-UniRule"/>
</dbReference>
<dbReference type="GO" id="GO:0006351">
    <property type="term" value="P:DNA-templated transcription"/>
    <property type="evidence" value="ECO:0007669"/>
    <property type="project" value="UniProtKB-UniRule"/>
</dbReference>
<dbReference type="CDD" id="cd02655">
    <property type="entry name" value="RNAP_beta'_C"/>
    <property type="match status" value="1"/>
</dbReference>
<dbReference type="CDD" id="cd01609">
    <property type="entry name" value="RNAP_beta'_N"/>
    <property type="match status" value="1"/>
</dbReference>
<dbReference type="FunFam" id="1.10.132.30:FF:000003">
    <property type="entry name" value="DNA-directed RNA polymerase subunit beta"/>
    <property type="match status" value="1"/>
</dbReference>
<dbReference type="FunFam" id="1.10.150.390:FF:000002">
    <property type="entry name" value="DNA-directed RNA polymerase subunit beta"/>
    <property type="match status" value="1"/>
</dbReference>
<dbReference type="FunFam" id="4.10.860.120:FF:000001">
    <property type="entry name" value="DNA-directed RNA polymerase subunit beta"/>
    <property type="match status" value="1"/>
</dbReference>
<dbReference type="Gene3D" id="1.10.132.30">
    <property type="match status" value="1"/>
</dbReference>
<dbReference type="Gene3D" id="1.10.150.390">
    <property type="match status" value="1"/>
</dbReference>
<dbReference type="Gene3D" id="1.10.1790.20">
    <property type="match status" value="1"/>
</dbReference>
<dbReference type="Gene3D" id="1.10.40.90">
    <property type="match status" value="1"/>
</dbReference>
<dbReference type="Gene3D" id="2.40.40.20">
    <property type="match status" value="1"/>
</dbReference>
<dbReference type="Gene3D" id="2.40.50.100">
    <property type="match status" value="3"/>
</dbReference>
<dbReference type="Gene3D" id="4.10.860.120">
    <property type="entry name" value="RNA polymerase II, clamp domain"/>
    <property type="match status" value="1"/>
</dbReference>
<dbReference type="Gene3D" id="1.10.274.100">
    <property type="entry name" value="RNA polymerase Rpb1, domain 3"/>
    <property type="match status" value="1"/>
</dbReference>
<dbReference type="HAMAP" id="MF_01322">
    <property type="entry name" value="RNApol_bact_RpoC"/>
    <property type="match status" value="1"/>
</dbReference>
<dbReference type="InterPro" id="IPR045867">
    <property type="entry name" value="DNA-dir_RpoC_beta_prime"/>
</dbReference>
<dbReference type="InterPro" id="IPR012754">
    <property type="entry name" value="DNA-dir_RpoC_beta_prime_bact"/>
</dbReference>
<dbReference type="InterPro" id="IPR000722">
    <property type="entry name" value="RNA_pol_asu"/>
</dbReference>
<dbReference type="InterPro" id="IPR006592">
    <property type="entry name" value="RNA_pol_N"/>
</dbReference>
<dbReference type="InterPro" id="IPR007080">
    <property type="entry name" value="RNA_pol_Rpb1_1"/>
</dbReference>
<dbReference type="InterPro" id="IPR007066">
    <property type="entry name" value="RNA_pol_Rpb1_3"/>
</dbReference>
<dbReference type="InterPro" id="IPR042102">
    <property type="entry name" value="RNA_pol_Rpb1_3_sf"/>
</dbReference>
<dbReference type="InterPro" id="IPR007083">
    <property type="entry name" value="RNA_pol_Rpb1_4"/>
</dbReference>
<dbReference type="InterPro" id="IPR007081">
    <property type="entry name" value="RNA_pol_Rpb1_5"/>
</dbReference>
<dbReference type="InterPro" id="IPR044893">
    <property type="entry name" value="RNA_pol_Rpb1_clamp_domain"/>
</dbReference>
<dbReference type="InterPro" id="IPR038120">
    <property type="entry name" value="Rpb1_funnel_sf"/>
</dbReference>
<dbReference type="NCBIfam" id="TIGR02386">
    <property type="entry name" value="rpoC_TIGR"/>
    <property type="match status" value="1"/>
</dbReference>
<dbReference type="PANTHER" id="PTHR19376">
    <property type="entry name" value="DNA-DIRECTED RNA POLYMERASE"/>
    <property type="match status" value="1"/>
</dbReference>
<dbReference type="PANTHER" id="PTHR19376:SF54">
    <property type="entry name" value="DNA-DIRECTED RNA POLYMERASE SUBUNIT BETA"/>
    <property type="match status" value="1"/>
</dbReference>
<dbReference type="Pfam" id="PF04997">
    <property type="entry name" value="RNA_pol_Rpb1_1"/>
    <property type="match status" value="1"/>
</dbReference>
<dbReference type="Pfam" id="PF00623">
    <property type="entry name" value="RNA_pol_Rpb1_2"/>
    <property type="match status" value="2"/>
</dbReference>
<dbReference type="Pfam" id="PF04983">
    <property type="entry name" value="RNA_pol_Rpb1_3"/>
    <property type="match status" value="1"/>
</dbReference>
<dbReference type="Pfam" id="PF05000">
    <property type="entry name" value="RNA_pol_Rpb1_4"/>
    <property type="match status" value="1"/>
</dbReference>
<dbReference type="Pfam" id="PF04998">
    <property type="entry name" value="RNA_pol_Rpb1_5"/>
    <property type="match status" value="1"/>
</dbReference>
<dbReference type="SMART" id="SM00663">
    <property type="entry name" value="RPOLA_N"/>
    <property type="match status" value="1"/>
</dbReference>
<dbReference type="SUPFAM" id="SSF64484">
    <property type="entry name" value="beta and beta-prime subunits of DNA dependent RNA-polymerase"/>
    <property type="match status" value="1"/>
</dbReference>
<organism>
    <name type="scientific">Burkholderia mallei (strain ATCC 23344)</name>
    <dbReference type="NCBI Taxonomy" id="243160"/>
    <lineage>
        <taxon>Bacteria</taxon>
        <taxon>Pseudomonadati</taxon>
        <taxon>Pseudomonadota</taxon>
        <taxon>Betaproteobacteria</taxon>
        <taxon>Burkholderiales</taxon>
        <taxon>Burkholderiaceae</taxon>
        <taxon>Burkholderia</taxon>
        <taxon>pseudomallei group</taxon>
    </lineage>
</organism>
<gene>
    <name evidence="1" type="primary">rpoC</name>
    <name type="ordered locus">BMA2640</name>
</gene>
<comment type="function">
    <text evidence="1">DNA-dependent RNA polymerase catalyzes the transcription of DNA into RNA using the four ribonucleoside triphosphates as substrates.</text>
</comment>
<comment type="catalytic activity">
    <reaction evidence="1">
        <text>RNA(n) + a ribonucleoside 5'-triphosphate = RNA(n+1) + diphosphate</text>
        <dbReference type="Rhea" id="RHEA:21248"/>
        <dbReference type="Rhea" id="RHEA-COMP:14527"/>
        <dbReference type="Rhea" id="RHEA-COMP:17342"/>
        <dbReference type="ChEBI" id="CHEBI:33019"/>
        <dbReference type="ChEBI" id="CHEBI:61557"/>
        <dbReference type="ChEBI" id="CHEBI:140395"/>
        <dbReference type="EC" id="2.7.7.6"/>
    </reaction>
</comment>
<comment type="cofactor">
    <cofactor evidence="1">
        <name>Mg(2+)</name>
        <dbReference type="ChEBI" id="CHEBI:18420"/>
    </cofactor>
    <text evidence="1">Binds 1 Mg(2+) ion per subunit.</text>
</comment>
<comment type="cofactor">
    <cofactor evidence="1">
        <name>Zn(2+)</name>
        <dbReference type="ChEBI" id="CHEBI:29105"/>
    </cofactor>
    <text evidence="1">Binds 2 Zn(2+) ions per subunit.</text>
</comment>
<comment type="subunit">
    <text evidence="1">The RNAP catalytic core consists of 2 alpha, 1 beta, 1 beta' and 1 omega subunit. When a sigma factor is associated with the core the holoenzyme is formed, which can initiate transcription.</text>
</comment>
<comment type="similarity">
    <text evidence="1">Belongs to the RNA polymerase beta' chain family.</text>
</comment>
<sequence>MKALLDLFKQVQQEEIFDAIKIGLASPDKIRSWSFGEVKKPETINYRTFKPERDGLFCAKIFGPIKDYECLCGKYKRLKHRGVICEKCGVEVTLAKVRRERMGHIELASPVAHIWFLKSLPSRLGMVLDMTLRDIERVLYFEAYVVIDPGMTPLKARQIMTEEDYYNKVEEYGDEFRAEMGAEGVRELLRSINIDEQVETLRTELKNTGSEAKIKKYAKRLKVLEAFQRSGIKPDWMILEVLPVLPPELRPLVPLDGGRFATSDLNDLYRRVINRNNRLKRLLELKAPEIIVRNEKRMLQEAVDSLLDNGRRGKAMTGANKRPLKSLADMIKGKGGRFRQNLLGKRVDYSGRSVIVVGPTLKLHQCGLPKLMALELFKPFIFNKLEVMGVATTIKAAKKEVENQTPVVWDILEEVIREHPVMLNRAPTLHRLGIQAFEPVLIEGKAIQLHPLVCAAFNADFDGDQMAVHVPLSLEAQMEARTLMLASNNVLFPANGDPSIVPSQDIVLGLYYATREAINGKGEGLSFTGVSEVIRAYENKEVELASRVNVRITEMVRNEDTSEGAPQFVPKISLYATTVGRAILSEILPPGLPFSVLNKPLKKKEISRLINTAFRKCGLRATVVFADQLMQSGFRLATRAGISICVDDMLVPTQKETIVGDAAKKVKEYDRQYMSGLVTAQERYNNVVDIWSATSEAVGKAMMEQLSTEPVIDRGGNETRQESFNSIYMMADSGARGSAVQIRQLAGMRGLMAKPDGSIIETPITANFREGLNVLQYFISTHGARKGLADTALKTANSGYLTRRLVDVTQDLVVVEDDCGTSNGVAMKALVEGGEVVEALRDRILGRVAASDVVNPETQETLYEAGALLDETAVEDIERLGIDEVRVRTALTCETRYGLCASCYGRDLGRGSLVNVGEAVGVIAAQSIGEPGTQLTMRTFHIGGAASRAAVASSVEAKSNGTVRFTASMRYVTNAKGEQIVISRSGEALITDDIGRERERHKIPYGATLLQLDGAAIKAGTQLATWDPLTRPIITEYGGTVKFENVEEGVTVAKQIDDVTGLSTLVVIDVKRRGSQAAKSVRPQVKLLDANGDEVKIPGTEHAVQIGFQVGALITVKDGQQVQVGEVLARIPTESQKTRDITGGLPRVAELFEARSPKDAGILAEVTGTVSFGKDTKGKQRLVITDLEGNQHEFLIAKEKQVLVHDGQVVNKGEMIVDGPADPHDILRLQGIEALSRYIVDEVQDVYRLQGVKINDKHIEVIVRQMLRRVQIVDNGDTRFIPGEQVERSDMLDENDRMIAEDKRPATYDNILLGITKASLSTDSFISAASFQETTRVLTEAAIMGKRDDLRGLKENVIVGRLIPAGTGLAFHKARKAKEQSDRERFDQIAAEEAFEFGTPSAPAEEPQHPAE</sequence>